<evidence type="ECO:0000250" key="1"/>
<evidence type="ECO:0000305" key="2"/>
<feature type="chain" id="PRO_0000228075" description="Mitochondrial import inner membrane translocase subunit tim13">
    <location>
        <begin position="1"/>
        <end position="108"/>
    </location>
</feature>
<feature type="short sequence motif" description="Twin CX3C motif">
    <location>
        <begin position="52"/>
        <end position="75"/>
    </location>
</feature>
<feature type="disulfide bond" evidence="1">
    <location>
        <begin position="52"/>
        <end position="75"/>
    </location>
</feature>
<feature type="disulfide bond" evidence="1">
    <location>
        <begin position="56"/>
        <end position="71"/>
    </location>
</feature>
<gene>
    <name type="primary">tim13</name>
    <name type="ORF">AN6306</name>
</gene>
<accession>Q5AZH4</accession>
<accession>C8V186</accession>
<dbReference type="EMBL" id="AACD01000107">
    <property type="protein sequence ID" value="EAA58690.1"/>
    <property type="molecule type" value="Genomic_DNA"/>
</dbReference>
<dbReference type="EMBL" id="BN001301">
    <property type="protein sequence ID" value="CBF69740.1"/>
    <property type="molecule type" value="Genomic_DNA"/>
</dbReference>
<dbReference type="RefSeq" id="XP_663910.1">
    <property type="nucleotide sequence ID" value="XM_658818.1"/>
</dbReference>
<dbReference type="SMR" id="Q5AZH4"/>
<dbReference type="FunCoup" id="Q5AZH4">
    <property type="interactions" value="425"/>
</dbReference>
<dbReference type="STRING" id="227321.Q5AZH4"/>
<dbReference type="EnsemblFungi" id="CBF69740">
    <property type="protein sequence ID" value="CBF69740"/>
    <property type="gene ID" value="ANIA_06306"/>
</dbReference>
<dbReference type="KEGG" id="ani:ANIA_06306"/>
<dbReference type="VEuPathDB" id="FungiDB:AN6306"/>
<dbReference type="eggNOG" id="KOG1733">
    <property type="taxonomic scope" value="Eukaryota"/>
</dbReference>
<dbReference type="HOGENOM" id="CLU_141397_0_1_1"/>
<dbReference type="InParanoid" id="Q5AZH4"/>
<dbReference type="OMA" id="RCISQCM"/>
<dbReference type="OrthoDB" id="7813104at2759"/>
<dbReference type="Proteomes" id="UP000000560">
    <property type="component" value="Chromosome I"/>
</dbReference>
<dbReference type="GO" id="GO:0005743">
    <property type="term" value="C:mitochondrial inner membrane"/>
    <property type="evidence" value="ECO:0007669"/>
    <property type="project" value="UniProtKB-SubCell"/>
</dbReference>
<dbReference type="GO" id="GO:0042719">
    <property type="term" value="C:mitochondrial intermembrane space protein transporter complex"/>
    <property type="evidence" value="ECO:0000318"/>
    <property type="project" value="GO_Central"/>
</dbReference>
<dbReference type="GO" id="GO:0046872">
    <property type="term" value="F:metal ion binding"/>
    <property type="evidence" value="ECO:0007669"/>
    <property type="project" value="UniProtKB-KW"/>
</dbReference>
<dbReference type="GO" id="GO:0140318">
    <property type="term" value="F:protein transporter activity"/>
    <property type="evidence" value="ECO:0007669"/>
    <property type="project" value="EnsemblFungi"/>
</dbReference>
<dbReference type="GO" id="GO:0045039">
    <property type="term" value="P:protein insertion into mitochondrial inner membrane"/>
    <property type="evidence" value="ECO:0000318"/>
    <property type="project" value="GO_Central"/>
</dbReference>
<dbReference type="FunFam" id="1.10.287.810:FF:000001">
    <property type="entry name" value="mitochondrial import inner membrane translocase subunit TIM13"/>
    <property type="match status" value="1"/>
</dbReference>
<dbReference type="Gene3D" id="1.10.287.810">
    <property type="entry name" value="Mitochondrial import inner membrane translocase subunit tim13 like domains"/>
    <property type="match status" value="1"/>
</dbReference>
<dbReference type="InterPro" id="IPR004217">
    <property type="entry name" value="Tim10-like"/>
</dbReference>
<dbReference type="InterPro" id="IPR035427">
    <property type="entry name" value="Tim10-like_dom_sf"/>
</dbReference>
<dbReference type="Pfam" id="PF02953">
    <property type="entry name" value="zf-Tim10_DDP"/>
    <property type="match status" value="1"/>
</dbReference>
<dbReference type="SUPFAM" id="SSF144122">
    <property type="entry name" value="Tim10-like"/>
    <property type="match status" value="1"/>
</dbReference>
<name>TIM13_EMENI</name>
<comment type="function">
    <text evidence="1">Mitochondrial intermembrane chaperone that participates in the import and insertion of some multi-pass transmembrane proteins into the mitochondrial inner membrane. Also required for the transfer of beta-barrel precursors from the TOM complex to the sorting and assembly machinery (SAM complex) of the outer membrane. Acts as a chaperone-like protein that protects the hydrophobic precursors from aggregation and guide them through the mitochondrial intermembrane space. The TIM8-TIM13 complex is non essential and only mediates the import of few proteins, while the predominant TIM9-TIM10 70 kDa complex is crucial and mediates the import of much more proteins (By similarity).</text>
</comment>
<comment type="subunit">
    <text evidence="1">Heterohexamer; composed of 3 copies of TIM8 and 3 copies of TIM13, named soluble 70 kDa complex. Associates with the TIM22 complex, whose core is composed of TIM22 and TIM54. Interacts with the transmembrane regions of multi-pass transmembrane proteins in transit (By similarity).</text>
</comment>
<comment type="subcellular location">
    <subcellularLocation>
        <location evidence="1">Mitochondrion inner membrane</location>
        <topology evidence="1">Peripheral membrane protein</topology>
        <orientation evidence="1">Intermembrane side</orientation>
    </subcellularLocation>
</comment>
<comment type="domain">
    <text evidence="1">The twin CX3C motif contains 4 conserved Cys residues that form 2 disulfide bonds in the mitochondrial intermembrane space. However, during the transit of TIM13 from cytoplasm into mitochondrion, the Cys residues probably coordinate zinc, thereby preventing folding and allowing its transfer across mitochondrial outer membrane (By similarity).</text>
</comment>
<comment type="similarity">
    <text evidence="2">Belongs to the small Tim family.</text>
</comment>
<sequence length="108" mass="11313">MALFGSSAPAAAAPANSAEDVQQTKANLIAQLQQEMAMANAKKLISKVNQNCFENCITAPGSSLSASESTCLSSCMEKYIQFWNAASKAYIARATTQTVAANAMATEL</sequence>
<protein>
    <recommendedName>
        <fullName>Mitochondrial import inner membrane translocase subunit tim13</fullName>
    </recommendedName>
</protein>
<keyword id="KW-0143">Chaperone</keyword>
<keyword id="KW-1015">Disulfide bond</keyword>
<keyword id="KW-0472">Membrane</keyword>
<keyword id="KW-0479">Metal-binding</keyword>
<keyword id="KW-0496">Mitochondrion</keyword>
<keyword id="KW-0999">Mitochondrion inner membrane</keyword>
<keyword id="KW-0653">Protein transport</keyword>
<keyword id="KW-1185">Reference proteome</keyword>
<keyword id="KW-0811">Translocation</keyword>
<keyword id="KW-0813">Transport</keyword>
<keyword id="KW-0862">Zinc</keyword>
<proteinExistence type="inferred from homology"/>
<reference key="1">
    <citation type="journal article" date="2005" name="Nature">
        <title>Sequencing of Aspergillus nidulans and comparative analysis with A. fumigatus and A. oryzae.</title>
        <authorList>
            <person name="Galagan J.E."/>
            <person name="Calvo S.E."/>
            <person name="Cuomo C."/>
            <person name="Ma L.-J."/>
            <person name="Wortman J.R."/>
            <person name="Batzoglou S."/>
            <person name="Lee S.-I."/>
            <person name="Bastuerkmen M."/>
            <person name="Spevak C.C."/>
            <person name="Clutterbuck J."/>
            <person name="Kapitonov V."/>
            <person name="Jurka J."/>
            <person name="Scazzocchio C."/>
            <person name="Farman M.L."/>
            <person name="Butler J."/>
            <person name="Purcell S."/>
            <person name="Harris S."/>
            <person name="Braus G.H."/>
            <person name="Draht O."/>
            <person name="Busch S."/>
            <person name="D'Enfert C."/>
            <person name="Bouchier C."/>
            <person name="Goldman G.H."/>
            <person name="Bell-Pedersen D."/>
            <person name="Griffiths-Jones S."/>
            <person name="Doonan J.H."/>
            <person name="Yu J."/>
            <person name="Vienken K."/>
            <person name="Pain A."/>
            <person name="Freitag M."/>
            <person name="Selker E.U."/>
            <person name="Archer D.B."/>
            <person name="Penalva M.A."/>
            <person name="Oakley B.R."/>
            <person name="Momany M."/>
            <person name="Tanaka T."/>
            <person name="Kumagai T."/>
            <person name="Asai K."/>
            <person name="Machida M."/>
            <person name="Nierman W.C."/>
            <person name="Denning D.W."/>
            <person name="Caddick M.X."/>
            <person name="Hynes M."/>
            <person name="Paoletti M."/>
            <person name="Fischer R."/>
            <person name="Miller B.L."/>
            <person name="Dyer P.S."/>
            <person name="Sachs M.S."/>
            <person name="Osmani S.A."/>
            <person name="Birren B.W."/>
        </authorList>
    </citation>
    <scope>NUCLEOTIDE SEQUENCE [LARGE SCALE GENOMIC DNA]</scope>
    <source>
        <strain>FGSC A4 / ATCC 38163 / CBS 112.46 / NRRL 194 / M139</strain>
    </source>
</reference>
<reference key="2">
    <citation type="journal article" date="2009" name="Fungal Genet. Biol.">
        <title>The 2008 update of the Aspergillus nidulans genome annotation: a community effort.</title>
        <authorList>
            <person name="Wortman J.R."/>
            <person name="Gilsenan J.M."/>
            <person name="Joardar V."/>
            <person name="Deegan J."/>
            <person name="Clutterbuck J."/>
            <person name="Andersen M.R."/>
            <person name="Archer D."/>
            <person name="Bencina M."/>
            <person name="Braus G."/>
            <person name="Coutinho P."/>
            <person name="von Dohren H."/>
            <person name="Doonan J."/>
            <person name="Driessen A.J."/>
            <person name="Durek P."/>
            <person name="Espeso E."/>
            <person name="Fekete E."/>
            <person name="Flipphi M."/>
            <person name="Estrada C.G."/>
            <person name="Geysens S."/>
            <person name="Goldman G."/>
            <person name="de Groot P.W."/>
            <person name="Hansen K."/>
            <person name="Harris S.D."/>
            <person name="Heinekamp T."/>
            <person name="Helmstaedt K."/>
            <person name="Henrissat B."/>
            <person name="Hofmann G."/>
            <person name="Homan T."/>
            <person name="Horio T."/>
            <person name="Horiuchi H."/>
            <person name="James S."/>
            <person name="Jones M."/>
            <person name="Karaffa L."/>
            <person name="Karanyi Z."/>
            <person name="Kato M."/>
            <person name="Keller N."/>
            <person name="Kelly D.E."/>
            <person name="Kiel J.A."/>
            <person name="Kim J.M."/>
            <person name="van der Klei I.J."/>
            <person name="Klis F.M."/>
            <person name="Kovalchuk A."/>
            <person name="Krasevec N."/>
            <person name="Kubicek C.P."/>
            <person name="Liu B."/>
            <person name="Maccabe A."/>
            <person name="Meyer V."/>
            <person name="Mirabito P."/>
            <person name="Miskei M."/>
            <person name="Mos M."/>
            <person name="Mullins J."/>
            <person name="Nelson D.R."/>
            <person name="Nielsen J."/>
            <person name="Oakley B.R."/>
            <person name="Osmani S.A."/>
            <person name="Pakula T."/>
            <person name="Paszewski A."/>
            <person name="Paulsen I."/>
            <person name="Pilsyk S."/>
            <person name="Pocsi I."/>
            <person name="Punt P.J."/>
            <person name="Ram A.F."/>
            <person name="Ren Q."/>
            <person name="Robellet X."/>
            <person name="Robson G."/>
            <person name="Seiboth B."/>
            <person name="van Solingen P."/>
            <person name="Specht T."/>
            <person name="Sun J."/>
            <person name="Taheri-Talesh N."/>
            <person name="Takeshita N."/>
            <person name="Ussery D."/>
            <person name="vanKuyk P.A."/>
            <person name="Visser H."/>
            <person name="van de Vondervoort P.J."/>
            <person name="de Vries R.P."/>
            <person name="Walton J."/>
            <person name="Xiang X."/>
            <person name="Xiong Y."/>
            <person name="Zeng A.P."/>
            <person name="Brandt B.W."/>
            <person name="Cornell M.J."/>
            <person name="van den Hondel C.A."/>
            <person name="Visser J."/>
            <person name="Oliver S.G."/>
            <person name="Turner G."/>
        </authorList>
    </citation>
    <scope>GENOME REANNOTATION</scope>
    <source>
        <strain>FGSC A4 / ATCC 38163 / CBS 112.46 / NRRL 194 / M139</strain>
    </source>
</reference>
<organism>
    <name type="scientific">Emericella nidulans (strain FGSC A4 / ATCC 38163 / CBS 112.46 / NRRL 194 / M139)</name>
    <name type="common">Aspergillus nidulans</name>
    <dbReference type="NCBI Taxonomy" id="227321"/>
    <lineage>
        <taxon>Eukaryota</taxon>
        <taxon>Fungi</taxon>
        <taxon>Dikarya</taxon>
        <taxon>Ascomycota</taxon>
        <taxon>Pezizomycotina</taxon>
        <taxon>Eurotiomycetes</taxon>
        <taxon>Eurotiomycetidae</taxon>
        <taxon>Eurotiales</taxon>
        <taxon>Aspergillaceae</taxon>
        <taxon>Aspergillus</taxon>
        <taxon>Aspergillus subgen. Nidulantes</taxon>
    </lineage>
</organism>